<dbReference type="EC" id="7.1.2.2" evidence="1"/>
<dbReference type="EMBL" id="FM178379">
    <property type="protein sequence ID" value="CAQ80743.1"/>
    <property type="molecule type" value="Genomic_DNA"/>
</dbReference>
<dbReference type="RefSeq" id="WP_012551442.1">
    <property type="nucleotide sequence ID" value="NC_011312.1"/>
</dbReference>
<dbReference type="SMR" id="B6EHG4"/>
<dbReference type="KEGG" id="vsa:VSAL_I3059"/>
<dbReference type="eggNOG" id="COG0055">
    <property type="taxonomic scope" value="Bacteria"/>
</dbReference>
<dbReference type="HOGENOM" id="CLU_022398_0_2_6"/>
<dbReference type="Proteomes" id="UP000001730">
    <property type="component" value="Chromosome 1"/>
</dbReference>
<dbReference type="GO" id="GO:0005886">
    <property type="term" value="C:plasma membrane"/>
    <property type="evidence" value="ECO:0007669"/>
    <property type="project" value="UniProtKB-SubCell"/>
</dbReference>
<dbReference type="GO" id="GO:0045259">
    <property type="term" value="C:proton-transporting ATP synthase complex"/>
    <property type="evidence" value="ECO:0007669"/>
    <property type="project" value="UniProtKB-KW"/>
</dbReference>
<dbReference type="GO" id="GO:0005524">
    <property type="term" value="F:ATP binding"/>
    <property type="evidence" value="ECO:0007669"/>
    <property type="project" value="UniProtKB-UniRule"/>
</dbReference>
<dbReference type="GO" id="GO:0016887">
    <property type="term" value="F:ATP hydrolysis activity"/>
    <property type="evidence" value="ECO:0007669"/>
    <property type="project" value="InterPro"/>
</dbReference>
<dbReference type="GO" id="GO:0046933">
    <property type="term" value="F:proton-transporting ATP synthase activity, rotational mechanism"/>
    <property type="evidence" value="ECO:0007669"/>
    <property type="project" value="UniProtKB-UniRule"/>
</dbReference>
<dbReference type="CDD" id="cd18110">
    <property type="entry name" value="ATP-synt_F1_beta_C"/>
    <property type="match status" value="1"/>
</dbReference>
<dbReference type="CDD" id="cd18115">
    <property type="entry name" value="ATP-synt_F1_beta_N"/>
    <property type="match status" value="1"/>
</dbReference>
<dbReference type="CDD" id="cd01133">
    <property type="entry name" value="F1-ATPase_beta_CD"/>
    <property type="match status" value="1"/>
</dbReference>
<dbReference type="FunFam" id="1.10.1140.10:FF:000001">
    <property type="entry name" value="ATP synthase subunit beta"/>
    <property type="match status" value="1"/>
</dbReference>
<dbReference type="FunFam" id="2.40.10.170:FF:000003">
    <property type="entry name" value="ATP synthase subunit beta"/>
    <property type="match status" value="1"/>
</dbReference>
<dbReference type="FunFam" id="3.40.50.300:FF:000004">
    <property type="entry name" value="ATP synthase subunit beta"/>
    <property type="match status" value="1"/>
</dbReference>
<dbReference type="Gene3D" id="2.40.10.170">
    <property type="match status" value="1"/>
</dbReference>
<dbReference type="Gene3D" id="1.10.1140.10">
    <property type="entry name" value="Bovine Mitochondrial F1-atpase, Atp Synthase Beta Chain, Chain D, domain 3"/>
    <property type="match status" value="1"/>
</dbReference>
<dbReference type="Gene3D" id="3.40.50.300">
    <property type="entry name" value="P-loop containing nucleotide triphosphate hydrolases"/>
    <property type="match status" value="1"/>
</dbReference>
<dbReference type="HAMAP" id="MF_01347">
    <property type="entry name" value="ATP_synth_beta_bact"/>
    <property type="match status" value="1"/>
</dbReference>
<dbReference type="InterPro" id="IPR003593">
    <property type="entry name" value="AAA+_ATPase"/>
</dbReference>
<dbReference type="InterPro" id="IPR055190">
    <property type="entry name" value="ATP-synt_VA_C"/>
</dbReference>
<dbReference type="InterPro" id="IPR005722">
    <property type="entry name" value="ATP_synth_F1_bsu"/>
</dbReference>
<dbReference type="InterPro" id="IPR020003">
    <property type="entry name" value="ATPase_a/bsu_AS"/>
</dbReference>
<dbReference type="InterPro" id="IPR050053">
    <property type="entry name" value="ATPase_alpha/beta_chains"/>
</dbReference>
<dbReference type="InterPro" id="IPR004100">
    <property type="entry name" value="ATPase_F1/V1/A1_a/bsu_N"/>
</dbReference>
<dbReference type="InterPro" id="IPR036121">
    <property type="entry name" value="ATPase_F1/V1/A1_a/bsu_N_sf"/>
</dbReference>
<dbReference type="InterPro" id="IPR000194">
    <property type="entry name" value="ATPase_F1/V1/A1_a/bsu_nucl-bd"/>
</dbReference>
<dbReference type="InterPro" id="IPR024034">
    <property type="entry name" value="ATPase_F1/V1_b/a_C"/>
</dbReference>
<dbReference type="InterPro" id="IPR027417">
    <property type="entry name" value="P-loop_NTPase"/>
</dbReference>
<dbReference type="NCBIfam" id="TIGR01039">
    <property type="entry name" value="atpD"/>
    <property type="match status" value="1"/>
</dbReference>
<dbReference type="PANTHER" id="PTHR15184">
    <property type="entry name" value="ATP SYNTHASE"/>
    <property type="match status" value="1"/>
</dbReference>
<dbReference type="PANTHER" id="PTHR15184:SF71">
    <property type="entry name" value="ATP SYNTHASE SUBUNIT BETA, MITOCHONDRIAL"/>
    <property type="match status" value="1"/>
</dbReference>
<dbReference type="Pfam" id="PF00006">
    <property type="entry name" value="ATP-synt_ab"/>
    <property type="match status" value="1"/>
</dbReference>
<dbReference type="Pfam" id="PF02874">
    <property type="entry name" value="ATP-synt_ab_N"/>
    <property type="match status" value="1"/>
</dbReference>
<dbReference type="Pfam" id="PF22919">
    <property type="entry name" value="ATP-synt_VA_C"/>
    <property type="match status" value="1"/>
</dbReference>
<dbReference type="SMART" id="SM00382">
    <property type="entry name" value="AAA"/>
    <property type="match status" value="1"/>
</dbReference>
<dbReference type="SUPFAM" id="SSF47917">
    <property type="entry name" value="C-terminal domain of alpha and beta subunits of F1 ATP synthase"/>
    <property type="match status" value="1"/>
</dbReference>
<dbReference type="SUPFAM" id="SSF50615">
    <property type="entry name" value="N-terminal domain of alpha and beta subunits of F1 ATP synthase"/>
    <property type="match status" value="1"/>
</dbReference>
<dbReference type="SUPFAM" id="SSF52540">
    <property type="entry name" value="P-loop containing nucleoside triphosphate hydrolases"/>
    <property type="match status" value="1"/>
</dbReference>
<dbReference type="PROSITE" id="PS00152">
    <property type="entry name" value="ATPASE_ALPHA_BETA"/>
    <property type="match status" value="1"/>
</dbReference>
<name>ATPB_ALISL</name>
<evidence type="ECO:0000255" key="1">
    <source>
        <dbReference type="HAMAP-Rule" id="MF_01347"/>
    </source>
</evidence>
<keyword id="KW-0066">ATP synthesis</keyword>
<keyword id="KW-0067">ATP-binding</keyword>
<keyword id="KW-0997">Cell inner membrane</keyword>
<keyword id="KW-1003">Cell membrane</keyword>
<keyword id="KW-0139">CF(1)</keyword>
<keyword id="KW-0375">Hydrogen ion transport</keyword>
<keyword id="KW-0406">Ion transport</keyword>
<keyword id="KW-0472">Membrane</keyword>
<keyword id="KW-0547">Nucleotide-binding</keyword>
<keyword id="KW-1278">Translocase</keyword>
<keyword id="KW-0813">Transport</keyword>
<protein>
    <recommendedName>
        <fullName evidence="1">ATP synthase subunit beta</fullName>
        <ecNumber evidence="1">7.1.2.2</ecNumber>
    </recommendedName>
    <alternativeName>
        <fullName evidence="1">ATP synthase F1 sector subunit beta</fullName>
    </alternativeName>
    <alternativeName>
        <fullName evidence="1">F-ATPase subunit beta</fullName>
    </alternativeName>
</protein>
<comment type="function">
    <text evidence="1">Produces ATP from ADP in the presence of a proton gradient across the membrane. The catalytic sites are hosted primarily by the beta subunits.</text>
</comment>
<comment type="catalytic activity">
    <reaction evidence="1">
        <text>ATP + H2O + 4 H(+)(in) = ADP + phosphate + 5 H(+)(out)</text>
        <dbReference type="Rhea" id="RHEA:57720"/>
        <dbReference type="ChEBI" id="CHEBI:15377"/>
        <dbReference type="ChEBI" id="CHEBI:15378"/>
        <dbReference type="ChEBI" id="CHEBI:30616"/>
        <dbReference type="ChEBI" id="CHEBI:43474"/>
        <dbReference type="ChEBI" id="CHEBI:456216"/>
        <dbReference type="EC" id="7.1.2.2"/>
    </reaction>
</comment>
<comment type="subunit">
    <text evidence="1">F-type ATPases have 2 components, CF(1) - the catalytic core - and CF(0) - the membrane proton channel. CF(1) has five subunits: alpha(3), beta(3), gamma(1), delta(1), epsilon(1). CF(0) has three main subunits: a(1), b(2) and c(9-12). The alpha and beta chains form an alternating ring which encloses part of the gamma chain. CF(1) is attached to CF(0) by a central stalk formed by the gamma and epsilon chains, while a peripheral stalk is formed by the delta and b chains.</text>
</comment>
<comment type="subcellular location">
    <subcellularLocation>
        <location evidence="1">Cell inner membrane</location>
        <topology evidence="1">Peripheral membrane protein</topology>
    </subcellularLocation>
</comment>
<comment type="similarity">
    <text evidence="1">Belongs to the ATPase alpha/beta chains family.</text>
</comment>
<accession>B6EHG4</accession>
<feature type="chain" id="PRO_1000143467" description="ATP synthase subunit beta">
    <location>
        <begin position="1"/>
        <end position="467"/>
    </location>
</feature>
<feature type="binding site" evidence="1">
    <location>
        <begin position="150"/>
        <end position="157"/>
    </location>
    <ligand>
        <name>ATP</name>
        <dbReference type="ChEBI" id="CHEBI:30616"/>
    </ligand>
</feature>
<proteinExistence type="inferred from homology"/>
<organism>
    <name type="scientific">Aliivibrio salmonicida (strain LFI1238)</name>
    <name type="common">Vibrio salmonicida (strain LFI1238)</name>
    <dbReference type="NCBI Taxonomy" id="316275"/>
    <lineage>
        <taxon>Bacteria</taxon>
        <taxon>Pseudomonadati</taxon>
        <taxon>Pseudomonadota</taxon>
        <taxon>Gammaproteobacteria</taxon>
        <taxon>Vibrionales</taxon>
        <taxon>Vibrionaceae</taxon>
        <taxon>Aliivibrio</taxon>
    </lineage>
</organism>
<gene>
    <name evidence="1" type="primary">atpD</name>
    <name type="ordered locus">VSAL_I3059</name>
</gene>
<sequence length="467" mass="50688">MTTGKIVQIIGAVVDVEFPQGSVPRVYDALNVVDAKERLVLEVQQQIGGGVVRAIVMGSSDGLRRGLTVENTGAPITVPVGTKTLGRIMNVLGDAIDECGEIGAEEHYSIHRAAPSYEEQANSTELLETGVKVIDLICPFAKGGKIGLFGGAGVGKTVNMMELINNIALQHSGLSVFAGVGERTREGNDFYFEMQEAGVVNIEHPEESKVAMVYGQMNEPPGNRLRVALTGLTMAERFRDEGRDVLLFIDNIYRYTLAGTEVSALLGRMPSAVGYQPTLAEEMGVLQERITSTRSGSITSVQAVYVPADDLTDPSPATTFAHLDATVVLNRNIASMGLYPAIDPLDSTSRQLDPLVVGQEHYDIARNVQSTLQRYKELKDIIAILGMDELSEEDKQVVSRARKIEKFLTQPYHVAEVFTGDPGIYVSLKDTLAGFKGLLAGDYDDVPEQAFMYCGRIEDALENAKKL</sequence>
<reference key="1">
    <citation type="journal article" date="2008" name="BMC Genomics">
        <title>The genome sequence of the fish pathogen Aliivibrio salmonicida strain LFI1238 shows extensive evidence of gene decay.</title>
        <authorList>
            <person name="Hjerde E."/>
            <person name="Lorentzen M.S."/>
            <person name="Holden M.T."/>
            <person name="Seeger K."/>
            <person name="Paulsen S."/>
            <person name="Bason N."/>
            <person name="Churcher C."/>
            <person name="Harris D."/>
            <person name="Norbertczak H."/>
            <person name="Quail M.A."/>
            <person name="Sanders S."/>
            <person name="Thurston S."/>
            <person name="Parkhill J."/>
            <person name="Willassen N.P."/>
            <person name="Thomson N.R."/>
        </authorList>
    </citation>
    <scope>NUCLEOTIDE SEQUENCE [LARGE SCALE GENOMIC DNA]</scope>
    <source>
        <strain>LFI1238</strain>
    </source>
</reference>